<accession>B2KDU6</accession>
<reference key="1">
    <citation type="journal article" date="2009" name="Appl. Environ. Microbiol.">
        <title>Genomic analysis of 'Elusimicrobium minutum,' the first cultivated representative of the phylum 'Elusimicrobia' (formerly termite group 1).</title>
        <authorList>
            <person name="Herlemann D.P.R."/>
            <person name="Geissinger O."/>
            <person name="Ikeda-Ohtsubo W."/>
            <person name="Kunin V."/>
            <person name="Sun H."/>
            <person name="Lapidus A."/>
            <person name="Hugenholtz P."/>
            <person name="Brune A."/>
        </authorList>
    </citation>
    <scope>NUCLEOTIDE SEQUENCE [LARGE SCALE GENOMIC DNA]</scope>
    <source>
        <strain>Pei191</strain>
    </source>
</reference>
<protein>
    <recommendedName>
        <fullName evidence="1">NADPH-dependent 7-cyano-7-deazaguanine reductase</fullName>
        <ecNumber evidence="1">1.7.1.13</ecNumber>
    </recommendedName>
    <alternativeName>
        <fullName evidence="1">7-cyano-7-carbaguanine reductase</fullName>
    </alternativeName>
    <alternativeName>
        <fullName evidence="1">NADPH-dependent nitrile oxidoreductase</fullName>
    </alternativeName>
    <alternativeName>
        <fullName evidence="1">PreQ(0) reductase</fullName>
    </alternativeName>
</protein>
<keyword id="KW-0963">Cytoplasm</keyword>
<keyword id="KW-0521">NADP</keyword>
<keyword id="KW-0560">Oxidoreductase</keyword>
<keyword id="KW-0671">Queuosine biosynthesis</keyword>
<keyword id="KW-1185">Reference proteome</keyword>
<dbReference type="EC" id="1.7.1.13" evidence="1"/>
<dbReference type="EMBL" id="CP001055">
    <property type="protein sequence ID" value="ACC98692.1"/>
    <property type="molecule type" value="Genomic_DNA"/>
</dbReference>
<dbReference type="RefSeq" id="WP_012415307.1">
    <property type="nucleotide sequence ID" value="NC_010644.1"/>
</dbReference>
<dbReference type="SMR" id="B2KDU6"/>
<dbReference type="STRING" id="445932.Emin_1140"/>
<dbReference type="KEGG" id="emi:Emin_1140"/>
<dbReference type="HOGENOM" id="CLU_102489_1_0_0"/>
<dbReference type="OrthoDB" id="9795077at2"/>
<dbReference type="UniPathway" id="UPA00392"/>
<dbReference type="Proteomes" id="UP000001029">
    <property type="component" value="Chromosome"/>
</dbReference>
<dbReference type="GO" id="GO:0005737">
    <property type="term" value="C:cytoplasm"/>
    <property type="evidence" value="ECO:0007669"/>
    <property type="project" value="UniProtKB-SubCell"/>
</dbReference>
<dbReference type="GO" id="GO:0033739">
    <property type="term" value="F:preQ1 synthase activity"/>
    <property type="evidence" value="ECO:0007669"/>
    <property type="project" value="UniProtKB-UniRule"/>
</dbReference>
<dbReference type="GO" id="GO:0008616">
    <property type="term" value="P:queuosine biosynthetic process"/>
    <property type="evidence" value="ECO:0007669"/>
    <property type="project" value="UniProtKB-UniRule"/>
</dbReference>
<dbReference type="GO" id="GO:0006400">
    <property type="term" value="P:tRNA modification"/>
    <property type="evidence" value="ECO:0007669"/>
    <property type="project" value="UniProtKB-UniRule"/>
</dbReference>
<dbReference type="Gene3D" id="3.30.1130.10">
    <property type="match status" value="1"/>
</dbReference>
<dbReference type="HAMAP" id="MF_00818">
    <property type="entry name" value="QueF_type1"/>
    <property type="match status" value="1"/>
</dbReference>
<dbReference type="InterPro" id="IPR043133">
    <property type="entry name" value="GTP-CH-I_C/QueF"/>
</dbReference>
<dbReference type="InterPro" id="IPR050084">
    <property type="entry name" value="NADPH_dep_7-cyano-7-deazaG_red"/>
</dbReference>
<dbReference type="InterPro" id="IPR029500">
    <property type="entry name" value="QueF"/>
</dbReference>
<dbReference type="InterPro" id="IPR016856">
    <property type="entry name" value="QueF_type1"/>
</dbReference>
<dbReference type="NCBIfam" id="TIGR03139">
    <property type="entry name" value="QueF-II"/>
    <property type="match status" value="1"/>
</dbReference>
<dbReference type="PANTHER" id="PTHR34354">
    <property type="entry name" value="NADPH-DEPENDENT 7-CYANO-7-DEAZAGUANINE REDUCTASE"/>
    <property type="match status" value="1"/>
</dbReference>
<dbReference type="PANTHER" id="PTHR34354:SF1">
    <property type="entry name" value="NADPH-DEPENDENT 7-CYANO-7-DEAZAGUANINE REDUCTASE"/>
    <property type="match status" value="1"/>
</dbReference>
<dbReference type="Pfam" id="PF14489">
    <property type="entry name" value="QueF"/>
    <property type="match status" value="1"/>
</dbReference>
<dbReference type="PIRSF" id="PIRSF027377">
    <property type="entry name" value="Nitrile_oxidored_QueF"/>
    <property type="match status" value="1"/>
</dbReference>
<dbReference type="SUPFAM" id="SSF55620">
    <property type="entry name" value="Tetrahydrobiopterin biosynthesis enzymes-like"/>
    <property type="match status" value="1"/>
</dbReference>
<proteinExistence type="inferred from homology"/>
<sequence length="132" mass="15203">MSDIDFGYTKDHARKGANAKLPEIQCWENQYKRDYDIRIELPEFTSVCPKTGLPDFGVITIDYIPDRLCLELKSLKYYLLEYRDMGIFMENIANKILDDVVKACKPKKAVVTGDFTPRGGLRSVIVAKYEKK</sequence>
<evidence type="ECO:0000255" key="1">
    <source>
        <dbReference type="HAMAP-Rule" id="MF_00818"/>
    </source>
</evidence>
<name>QUEF_ELUMP</name>
<gene>
    <name evidence="1" type="primary">queF</name>
    <name type="ordered locus">Emin_1140</name>
</gene>
<feature type="chain" id="PRO_1000134302" description="NADPH-dependent 7-cyano-7-deazaguanine reductase">
    <location>
        <begin position="1"/>
        <end position="132"/>
    </location>
</feature>
<feature type="active site" description="Thioimide intermediate" evidence="1">
    <location>
        <position position="48"/>
    </location>
</feature>
<feature type="active site" description="Proton donor" evidence="1">
    <location>
        <position position="55"/>
    </location>
</feature>
<feature type="binding site" evidence="1">
    <location>
        <begin position="70"/>
        <end position="72"/>
    </location>
    <ligand>
        <name>substrate</name>
    </ligand>
</feature>
<feature type="binding site" evidence="1">
    <location>
        <begin position="89"/>
        <end position="90"/>
    </location>
    <ligand>
        <name>substrate</name>
    </ligand>
</feature>
<comment type="function">
    <text evidence="1">Catalyzes the NADPH-dependent reduction of 7-cyano-7-deazaguanine (preQ0) to 7-aminomethyl-7-deazaguanine (preQ1).</text>
</comment>
<comment type="catalytic activity">
    <reaction evidence="1">
        <text>7-aminomethyl-7-carbaguanine + 2 NADP(+) = 7-cyano-7-deazaguanine + 2 NADPH + 3 H(+)</text>
        <dbReference type="Rhea" id="RHEA:13409"/>
        <dbReference type="ChEBI" id="CHEBI:15378"/>
        <dbReference type="ChEBI" id="CHEBI:45075"/>
        <dbReference type="ChEBI" id="CHEBI:57783"/>
        <dbReference type="ChEBI" id="CHEBI:58349"/>
        <dbReference type="ChEBI" id="CHEBI:58703"/>
        <dbReference type="EC" id="1.7.1.13"/>
    </reaction>
</comment>
<comment type="pathway">
    <text evidence="1">tRNA modification; tRNA-queuosine biosynthesis.</text>
</comment>
<comment type="subcellular location">
    <subcellularLocation>
        <location evidence="1">Cytoplasm</location>
    </subcellularLocation>
</comment>
<comment type="similarity">
    <text evidence="1">Belongs to the GTP cyclohydrolase I family. QueF type 1 subfamily.</text>
</comment>
<organism>
    <name type="scientific">Elusimicrobium minutum (strain Pei191)</name>
    <dbReference type="NCBI Taxonomy" id="445932"/>
    <lineage>
        <taxon>Bacteria</taxon>
        <taxon>Pseudomonadati</taxon>
        <taxon>Elusimicrobiota</taxon>
        <taxon>Elusimicrobia</taxon>
        <taxon>Elusimicrobiales</taxon>
        <taxon>Elusimicrobiaceae</taxon>
        <taxon>Elusimicrobium</taxon>
    </lineage>
</organism>